<proteinExistence type="inferred from homology"/>
<evidence type="ECO:0000255" key="1">
    <source>
        <dbReference type="HAMAP-Rule" id="MF_00443"/>
    </source>
</evidence>
<evidence type="ECO:0000256" key="2">
    <source>
        <dbReference type="SAM" id="MobiDB-lite"/>
    </source>
</evidence>
<feature type="chain" id="PRO_1000206131" description="Thiazole synthase">
    <location>
        <begin position="1"/>
        <end position="264"/>
    </location>
</feature>
<feature type="region of interest" description="Disordered" evidence="2">
    <location>
        <begin position="245"/>
        <end position="264"/>
    </location>
</feature>
<feature type="active site" description="Schiff-base intermediate with DXP" evidence="1">
    <location>
        <position position="101"/>
    </location>
</feature>
<feature type="binding site" evidence="1">
    <location>
        <position position="162"/>
    </location>
    <ligand>
        <name>1-deoxy-D-xylulose 5-phosphate</name>
        <dbReference type="ChEBI" id="CHEBI:57792"/>
    </ligand>
</feature>
<feature type="binding site" evidence="1">
    <location>
        <begin position="189"/>
        <end position="190"/>
    </location>
    <ligand>
        <name>1-deoxy-D-xylulose 5-phosphate</name>
        <dbReference type="ChEBI" id="CHEBI:57792"/>
    </ligand>
</feature>
<feature type="binding site" evidence="1">
    <location>
        <begin position="211"/>
        <end position="212"/>
    </location>
    <ligand>
        <name>1-deoxy-D-xylulose 5-phosphate</name>
        <dbReference type="ChEBI" id="CHEBI:57792"/>
    </ligand>
</feature>
<dbReference type="EC" id="2.8.1.10" evidence="1"/>
<dbReference type="EMBL" id="CP000934">
    <property type="protein sequence ID" value="ACE82791.1"/>
    <property type="molecule type" value="Genomic_DNA"/>
</dbReference>
<dbReference type="RefSeq" id="WP_012487710.1">
    <property type="nucleotide sequence ID" value="NC_010995.1"/>
</dbReference>
<dbReference type="SMR" id="B3PIG8"/>
<dbReference type="STRING" id="498211.CJA_2108"/>
<dbReference type="KEGG" id="cja:CJA_2108"/>
<dbReference type="eggNOG" id="COG2022">
    <property type="taxonomic scope" value="Bacteria"/>
</dbReference>
<dbReference type="HOGENOM" id="CLU_062233_1_0_6"/>
<dbReference type="OrthoDB" id="9805935at2"/>
<dbReference type="UniPathway" id="UPA00060"/>
<dbReference type="Proteomes" id="UP000001036">
    <property type="component" value="Chromosome"/>
</dbReference>
<dbReference type="GO" id="GO:0005737">
    <property type="term" value="C:cytoplasm"/>
    <property type="evidence" value="ECO:0007669"/>
    <property type="project" value="UniProtKB-SubCell"/>
</dbReference>
<dbReference type="GO" id="GO:1990107">
    <property type="term" value="F:thiazole synthase activity"/>
    <property type="evidence" value="ECO:0007669"/>
    <property type="project" value="UniProtKB-EC"/>
</dbReference>
<dbReference type="GO" id="GO:0009229">
    <property type="term" value="P:thiamine diphosphate biosynthetic process"/>
    <property type="evidence" value="ECO:0007669"/>
    <property type="project" value="UniProtKB-UniRule"/>
</dbReference>
<dbReference type="CDD" id="cd04728">
    <property type="entry name" value="ThiG"/>
    <property type="match status" value="1"/>
</dbReference>
<dbReference type="Gene3D" id="3.20.20.70">
    <property type="entry name" value="Aldolase class I"/>
    <property type="match status" value="1"/>
</dbReference>
<dbReference type="HAMAP" id="MF_00443">
    <property type="entry name" value="ThiG"/>
    <property type="match status" value="1"/>
</dbReference>
<dbReference type="InterPro" id="IPR013785">
    <property type="entry name" value="Aldolase_TIM"/>
</dbReference>
<dbReference type="InterPro" id="IPR033983">
    <property type="entry name" value="Thiazole_synthase_ThiG"/>
</dbReference>
<dbReference type="InterPro" id="IPR008867">
    <property type="entry name" value="ThiG"/>
</dbReference>
<dbReference type="PANTHER" id="PTHR34266">
    <property type="entry name" value="THIAZOLE SYNTHASE"/>
    <property type="match status" value="1"/>
</dbReference>
<dbReference type="PANTHER" id="PTHR34266:SF2">
    <property type="entry name" value="THIAZOLE SYNTHASE"/>
    <property type="match status" value="1"/>
</dbReference>
<dbReference type="Pfam" id="PF05690">
    <property type="entry name" value="ThiG"/>
    <property type="match status" value="1"/>
</dbReference>
<dbReference type="SUPFAM" id="SSF110399">
    <property type="entry name" value="ThiG-like"/>
    <property type="match status" value="1"/>
</dbReference>
<organism>
    <name type="scientific">Cellvibrio japonicus (strain Ueda107)</name>
    <name type="common">Pseudomonas fluorescens subsp. cellulosa</name>
    <dbReference type="NCBI Taxonomy" id="498211"/>
    <lineage>
        <taxon>Bacteria</taxon>
        <taxon>Pseudomonadati</taxon>
        <taxon>Pseudomonadota</taxon>
        <taxon>Gammaproteobacteria</taxon>
        <taxon>Cellvibrionales</taxon>
        <taxon>Cellvibrionaceae</taxon>
        <taxon>Cellvibrio</taxon>
    </lineage>
</organism>
<sequence length="264" mass="29157">MSQTKDFVLYGEHFNSRFLLGTALYASPQLMRDSIEKSRCDIVTLGLRRQNPANRDGDTFWQYIQDSGCRLLPNTAGCKSVKEAVTLAEMSREIFDTDWIKLEVVGDDYNLQPDPFGLVEAAGILIKQGFKVLPYCTDDLILCKRLLDVGCQVLMPWGAPIGTGQGLLNRYNLRSLRERIKDVPMIIDAGLGAPSQAAEAMEMGYDGILLNTAVAKAHNPPLMAEAFADAIDAGRKAYNAGLMQKRQTASPSTPTLGQPFWHNQ</sequence>
<keyword id="KW-0963">Cytoplasm</keyword>
<keyword id="KW-1185">Reference proteome</keyword>
<keyword id="KW-0704">Schiff base</keyword>
<keyword id="KW-0784">Thiamine biosynthesis</keyword>
<keyword id="KW-0808">Transferase</keyword>
<gene>
    <name evidence="1" type="primary">thiG</name>
    <name type="ordered locus">CJA_2108</name>
</gene>
<comment type="function">
    <text evidence="1">Catalyzes the rearrangement of 1-deoxy-D-xylulose 5-phosphate (DXP) to produce the thiazole phosphate moiety of thiamine. Sulfur is provided by the thiocarboxylate moiety of the carrier protein ThiS. In vitro, sulfur can be provided by H(2)S.</text>
</comment>
<comment type="catalytic activity">
    <reaction evidence="1">
        <text>[ThiS sulfur-carrier protein]-C-terminal-Gly-aminoethanethioate + 2-iminoacetate + 1-deoxy-D-xylulose 5-phosphate = [ThiS sulfur-carrier protein]-C-terminal Gly-Gly + 2-[(2R,5Z)-2-carboxy-4-methylthiazol-5(2H)-ylidene]ethyl phosphate + 2 H2O + H(+)</text>
        <dbReference type="Rhea" id="RHEA:26297"/>
        <dbReference type="Rhea" id="RHEA-COMP:12909"/>
        <dbReference type="Rhea" id="RHEA-COMP:19908"/>
        <dbReference type="ChEBI" id="CHEBI:15377"/>
        <dbReference type="ChEBI" id="CHEBI:15378"/>
        <dbReference type="ChEBI" id="CHEBI:57792"/>
        <dbReference type="ChEBI" id="CHEBI:62899"/>
        <dbReference type="ChEBI" id="CHEBI:77846"/>
        <dbReference type="ChEBI" id="CHEBI:90778"/>
        <dbReference type="ChEBI" id="CHEBI:232372"/>
        <dbReference type="EC" id="2.8.1.10"/>
    </reaction>
</comment>
<comment type="pathway">
    <text evidence="1">Cofactor biosynthesis; thiamine diphosphate biosynthesis.</text>
</comment>
<comment type="subunit">
    <text evidence="1">Homotetramer. Forms heterodimers with either ThiH or ThiS.</text>
</comment>
<comment type="subcellular location">
    <subcellularLocation>
        <location evidence="1">Cytoplasm</location>
    </subcellularLocation>
</comment>
<comment type="similarity">
    <text evidence="1">Belongs to the ThiG family.</text>
</comment>
<reference key="1">
    <citation type="journal article" date="2008" name="J. Bacteriol.">
        <title>Insights into plant cell wall degradation from the genome sequence of the soil bacterium Cellvibrio japonicus.</title>
        <authorList>
            <person name="DeBoy R.T."/>
            <person name="Mongodin E.F."/>
            <person name="Fouts D.E."/>
            <person name="Tailford L.E."/>
            <person name="Khouri H."/>
            <person name="Emerson J.B."/>
            <person name="Mohamoud Y."/>
            <person name="Watkins K."/>
            <person name="Henrissat B."/>
            <person name="Gilbert H.J."/>
            <person name="Nelson K.E."/>
        </authorList>
    </citation>
    <scope>NUCLEOTIDE SEQUENCE [LARGE SCALE GENOMIC DNA]</scope>
    <source>
        <strain>Ueda107</strain>
    </source>
</reference>
<protein>
    <recommendedName>
        <fullName evidence="1">Thiazole synthase</fullName>
        <ecNumber evidence="1">2.8.1.10</ecNumber>
    </recommendedName>
</protein>
<accession>B3PIG8</accession>
<name>THIG_CELJU</name>